<proteinExistence type="evidence at protein level"/>
<name>ACHA7_BOVIN</name>
<accession>P54131</accession>
<evidence type="ECO:0000250" key="1">
    <source>
        <dbReference type="UniProtKB" id="P02709"/>
    </source>
</evidence>
<evidence type="ECO:0000250" key="2">
    <source>
        <dbReference type="UniProtKB" id="P36544"/>
    </source>
</evidence>
<evidence type="ECO:0000250" key="3">
    <source>
        <dbReference type="UniProtKB" id="P49582"/>
    </source>
</evidence>
<evidence type="ECO:0000250" key="4">
    <source>
        <dbReference type="UniProtKB" id="Q05941"/>
    </source>
</evidence>
<evidence type="ECO:0000255" key="5"/>
<evidence type="ECO:0000269" key="6">
    <source>
    </source>
</evidence>
<evidence type="ECO:0000303" key="7">
    <source>
    </source>
</evidence>
<evidence type="ECO:0000305" key="8"/>
<protein>
    <recommendedName>
        <fullName>Neuronal acetylcholine receptor subunit alpha-7</fullName>
        <shortName>nAChR7</shortName>
    </recommendedName>
    <alternativeName>
        <fullName>Nicotinic acetylcholine receptor subunit alpha-7</fullName>
    </alternativeName>
</protein>
<dbReference type="EMBL" id="X93604">
    <property type="protein sequence ID" value="CAA63802.1"/>
    <property type="molecule type" value="mRNA"/>
</dbReference>
<dbReference type="RefSeq" id="NP_776940.1">
    <molecule id="P54131-1"/>
    <property type="nucleotide sequence ID" value="NM_174515.2"/>
</dbReference>
<dbReference type="SMR" id="P54131"/>
<dbReference type="FunCoup" id="P54131">
    <property type="interactions" value="1203"/>
</dbReference>
<dbReference type="STRING" id="9913.ENSBTAP00000020942"/>
<dbReference type="BindingDB" id="P54131"/>
<dbReference type="ChEMBL" id="CHEMBL5934"/>
<dbReference type="GlyCosmos" id="P54131">
    <property type="glycosylation" value="3 sites, No reported glycans"/>
</dbReference>
<dbReference type="GlyGen" id="P54131">
    <property type="glycosylation" value="3 sites"/>
</dbReference>
<dbReference type="PaxDb" id="9913-ENSBTAP00000020942"/>
<dbReference type="GeneID" id="282178"/>
<dbReference type="KEGG" id="bta:282178"/>
<dbReference type="CTD" id="1139"/>
<dbReference type="eggNOG" id="KOG3646">
    <property type="taxonomic scope" value="Eukaryota"/>
</dbReference>
<dbReference type="InParanoid" id="P54131"/>
<dbReference type="OrthoDB" id="5975154at2759"/>
<dbReference type="Proteomes" id="UP000009136">
    <property type="component" value="Unplaced"/>
</dbReference>
<dbReference type="GO" id="GO:0005892">
    <property type="term" value="C:acetylcholine-gated channel complex"/>
    <property type="evidence" value="ECO:0000250"/>
    <property type="project" value="UniProtKB"/>
</dbReference>
<dbReference type="GO" id="GO:0030425">
    <property type="term" value="C:dendrite"/>
    <property type="evidence" value="ECO:0000250"/>
    <property type="project" value="UniProtKB"/>
</dbReference>
<dbReference type="GO" id="GO:0043005">
    <property type="term" value="C:neuron projection"/>
    <property type="evidence" value="ECO:0000318"/>
    <property type="project" value="GO_Central"/>
</dbReference>
<dbReference type="GO" id="GO:0005886">
    <property type="term" value="C:plasma membrane"/>
    <property type="evidence" value="ECO:0000250"/>
    <property type="project" value="UniProtKB"/>
</dbReference>
<dbReference type="GO" id="GO:0045211">
    <property type="term" value="C:postsynaptic membrane"/>
    <property type="evidence" value="ECO:0007669"/>
    <property type="project" value="UniProtKB-SubCell"/>
</dbReference>
<dbReference type="GO" id="GO:0045202">
    <property type="term" value="C:synapse"/>
    <property type="evidence" value="ECO:0000318"/>
    <property type="project" value="GO_Central"/>
</dbReference>
<dbReference type="GO" id="GO:0042166">
    <property type="term" value="F:acetylcholine binding"/>
    <property type="evidence" value="ECO:0000250"/>
    <property type="project" value="UniProtKB"/>
</dbReference>
<dbReference type="GO" id="GO:0015464">
    <property type="term" value="F:acetylcholine receptor activity"/>
    <property type="evidence" value="ECO:0000250"/>
    <property type="project" value="UniProtKB"/>
</dbReference>
<dbReference type="GO" id="GO:0022848">
    <property type="term" value="F:acetylcholine-gated monoatomic cation-selective channel activity"/>
    <property type="evidence" value="ECO:0000250"/>
    <property type="project" value="UniProtKB"/>
</dbReference>
<dbReference type="GO" id="GO:0001540">
    <property type="term" value="F:amyloid-beta binding"/>
    <property type="evidence" value="ECO:0000250"/>
    <property type="project" value="UniProtKB"/>
</dbReference>
<dbReference type="GO" id="GO:0017081">
    <property type="term" value="F:chloride channel regulator activity"/>
    <property type="evidence" value="ECO:0000250"/>
    <property type="project" value="UniProtKB"/>
</dbReference>
<dbReference type="GO" id="GO:0042803">
    <property type="term" value="F:protein homodimerization activity"/>
    <property type="evidence" value="ECO:0000250"/>
    <property type="project" value="UniProtKB"/>
</dbReference>
<dbReference type="GO" id="GO:0015643">
    <property type="term" value="F:toxic substance binding"/>
    <property type="evidence" value="ECO:0000250"/>
    <property type="project" value="UniProtKB"/>
</dbReference>
<dbReference type="GO" id="GO:0006816">
    <property type="term" value="P:calcium ion transport"/>
    <property type="evidence" value="ECO:0000250"/>
    <property type="project" value="UniProtKB"/>
</dbReference>
<dbReference type="GO" id="GO:0007268">
    <property type="term" value="P:chemical synaptic transmission"/>
    <property type="evidence" value="ECO:0000318"/>
    <property type="project" value="GO_Central"/>
</dbReference>
<dbReference type="GO" id="GO:0050890">
    <property type="term" value="P:cognition"/>
    <property type="evidence" value="ECO:0000250"/>
    <property type="project" value="UniProtKB"/>
</dbReference>
<dbReference type="GO" id="GO:0006874">
    <property type="term" value="P:intracellular calcium ion homeostasis"/>
    <property type="evidence" value="ECO:0000250"/>
    <property type="project" value="UniProtKB"/>
</dbReference>
<dbReference type="GO" id="GO:0034220">
    <property type="term" value="P:monoatomic ion transmembrane transport"/>
    <property type="evidence" value="ECO:0000318"/>
    <property type="project" value="GO_Central"/>
</dbReference>
<dbReference type="GO" id="GO:1900016">
    <property type="term" value="P:negative regulation of cytokine production involved in inflammatory response"/>
    <property type="evidence" value="ECO:0000250"/>
    <property type="project" value="UniProtKB"/>
</dbReference>
<dbReference type="GO" id="GO:0032720">
    <property type="term" value="P:negative regulation of tumor necrosis factor production"/>
    <property type="evidence" value="ECO:0000250"/>
    <property type="project" value="UniProtKB"/>
</dbReference>
<dbReference type="GO" id="GO:0045766">
    <property type="term" value="P:positive regulation of angiogenesis"/>
    <property type="evidence" value="ECO:0000250"/>
    <property type="project" value="UniProtKB"/>
</dbReference>
<dbReference type="GO" id="GO:0008284">
    <property type="term" value="P:positive regulation of cell population proliferation"/>
    <property type="evidence" value="ECO:0000250"/>
    <property type="project" value="UniProtKB"/>
</dbReference>
<dbReference type="GO" id="GO:0043410">
    <property type="term" value="P:positive regulation of MAPK cascade"/>
    <property type="evidence" value="ECO:0000250"/>
    <property type="project" value="UniProtKB"/>
</dbReference>
<dbReference type="GO" id="GO:0042391">
    <property type="term" value="P:regulation of membrane potential"/>
    <property type="evidence" value="ECO:0000318"/>
    <property type="project" value="GO_Central"/>
</dbReference>
<dbReference type="GO" id="GO:0001666">
    <property type="term" value="P:response to hypoxia"/>
    <property type="evidence" value="ECO:0000250"/>
    <property type="project" value="UniProtKB"/>
</dbReference>
<dbReference type="GO" id="GO:0035094">
    <property type="term" value="P:response to nicotine"/>
    <property type="evidence" value="ECO:0000250"/>
    <property type="project" value="UniProtKB"/>
</dbReference>
<dbReference type="GO" id="GO:0007165">
    <property type="term" value="P:signal transduction"/>
    <property type="evidence" value="ECO:0000250"/>
    <property type="project" value="UniProtKB"/>
</dbReference>
<dbReference type="GO" id="GO:0007271">
    <property type="term" value="P:synaptic transmission, cholinergic"/>
    <property type="evidence" value="ECO:0000250"/>
    <property type="project" value="UniProtKB"/>
</dbReference>
<dbReference type="CDD" id="cd19020">
    <property type="entry name" value="LGIC_ECD_nAChR_A7"/>
    <property type="match status" value="1"/>
</dbReference>
<dbReference type="CDD" id="cd19051">
    <property type="entry name" value="LGIC_TM_cation"/>
    <property type="match status" value="1"/>
</dbReference>
<dbReference type="FunFam" id="1.20.58.390:FF:000007">
    <property type="entry name" value="Neuronal acetylcholine receptor subunit alpha-7"/>
    <property type="match status" value="1"/>
</dbReference>
<dbReference type="FunFam" id="2.70.170.10:FF:000009">
    <property type="entry name" value="Neuronal acetylcholine receptor subunit alpha-7"/>
    <property type="match status" value="1"/>
</dbReference>
<dbReference type="FunFam" id="1.20.58.390:FF:000011">
    <property type="entry name" value="neuronal acetylcholine receptor subunit alpha-7"/>
    <property type="match status" value="1"/>
</dbReference>
<dbReference type="Gene3D" id="2.70.170.10">
    <property type="entry name" value="Neurotransmitter-gated ion-channel ligand-binding domain"/>
    <property type="match status" value="1"/>
</dbReference>
<dbReference type="Gene3D" id="1.20.58.390">
    <property type="entry name" value="Neurotransmitter-gated ion-channel transmembrane domain"/>
    <property type="match status" value="2"/>
</dbReference>
<dbReference type="InterPro" id="IPR006202">
    <property type="entry name" value="Neur_chan_lig-bd"/>
</dbReference>
<dbReference type="InterPro" id="IPR036734">
    <property type="entry name" value="Neur_chan_lig-bd_sf"/>
</dbReference>
<dbReference type="InterPro" id="IPR006201">
    <property type="entry name" value="Neur_channel"/>
</dbReference>
<dbReference type="InterPro" id="IPR036719">
    <property type="entry name" value="Neuro-gated_channel_TM_sf"/>
</dbReference>
<dbReference type="InterPro" id="IPR038050">
    <property type="entry name" value="Neuro_actylchol_rec"/>
</dbReference>
<dbReference type="InterPro" id="IPR006029">
    <property type="entry name" value="Neurotrans-gated_channel_TM"/>
</dbReference>
<dbReference type="InterPro" id="IPR018000">
    <property type="entry name" value="Neurotransmitter_ion_chnl_CS"/>
</dbReference>
<dbReference type="InterPro" id="IPR002394">
    <property type="entry name" value="Nicotinic_acetylcholine_rcpt"/>
</dbReference>
<dbReference type="NCBIfam" id="TIGR00860">
    <property type="entry name" value="LIC"/>
    <property type="match status" value="1"/>
</dbReference>
<dbReference type="PANTHER" id="PTHR18945">
    <property type="entry name" value="NEUROTRANSMITTER GATED ION CHANNEL"/>
    <property type="match status" value="1"/>
</dbReference>
<dbReference type="Pfam" id="PF02931">
    <property type="entry name" value="Neur_chan_LBD"/>
    <property type="match status" value="1"/>
</dbReference>
<dbReference type="Pfam" id="PF02932">
    <property type="entry name" value="Neur_chan_memb"/>
    <property type="match status" value="1"/>
</dbReference>
<dbReference type="PRINTS" id="PR00254">
    <property type="entry name" value="NICOTINICR"/>
</dbReference>
<dbReference type="PRINTS" id="PR00252">
    <property type="entry name" value="NRIONCHANNEL"/>
</dbReference>
<dbReference type="SUPFAM" id="SSF90112">
    <property type="entry name" value="Neurotransmitter-gated ion-channel transmembrane pore"/>
    <property type="match status" value="1"/>
</dbReference>
<dbReference type="SUPFAM" id="SSF63712">
    <property type="entry name" value="Nicotinic receptor ligand binding domain-like"/>
    <property type="match status" value="1"/>
</dbReference>
<dbReference type="PROSITE" id="PS00236">
    <property type="entry name" value="NEUROTR_ION_CHANNEL"/>
    <property type="match status" value="1"/>
</dbReference>
<feature type="signal peptide" evidence="5">
    <location>
        <begin position="1"/>
        <end position="19"/>
    </location>
</feature>
<feature type="chain" id="PRO_0000000365" description="Neuronal acetylcholine receptor subunit alpha-7">
    <location>
        <begin position="20"/>
        <end position="499"/>
    </location>
</feature>
<feature type="topological domain" description="Extracellular" evidence="5">
    <location>
        <begin position="20"/>
        <end position="230"/>
    </location>
</feature>
<feature type="transmembrane region" description="Helical" evidence="5">
    <location>
        <begin position="231"/>
        <end position="251"/>
    </location>
</feature>
<feature type="transmembrane region" description="Helical" evidence="5">
    <location>
        <begin position="259"/>
        <end position="279"/>
    </location>
</feature>
<feature type="transmembrane region" description="Helical" evidence="5">
    <location>
        <begin position="292"/>
        <end position="312"/>
    </location>
</feature>
<feature type="topological domain" description="Cytoplasmic" evidence="5">
    <location>
        <begin position="313"/>
        <end position="466"/>
    </location>
</feature>
<feature type="transmembrane region" description="Helical" evidence="5">
    <location>
        <begin position="467"/>
        <end position="487"/>
    </location>
</feature>
<feature type="region of interest" description="Essential for TMEM35A/NACHO-mediated proper subunit assembly and trafficking to cell membrane" evidence="3">
    <location>
        <begin position="257"/>
        <end position="264"/>
    </location>
</feature>
<feature type="binding site" evidence="2">
    <location>
        <position position="39"/>
    </location>
    <ligand>
        <name>Ca(2+)</name>
        <dbReference type="ChEBI" id="CHEBI:29108"/>
    </ligand>
</feature>
<feature type="binding site" evidence="2">
    <location>
        <position position="41"/>
    </location>
    <ligand>
        <name>Ca(2+)</name>
        <dbReference type="ChEBI" id="CHEBI:29108"/>
    </ligand>
</feature>
<feature type="binding site" evidence="2">
    <location>
        <position position="169"/>
    </location>
    <ligand>
        <name>Ca(2+)</name>
        <dbReference type="ChEBI" id="CHEBI:29108"/>
    </ligand>
</feature>
<feature type="binding site" evidence="2">
    <location>
        <position position="207"/>
    </location>
    <ligand>
        <name>Ca(2+)</name>
        <dbReference type="ChEBI" id="CHEBI:29108"/>
    </ligand>
</feature>
<feature type="glycosylation site" description="N-linked (GlcNAc...) asparagine" evidence="5">
    <location>
        <position position="43"/>
    </location>
</feature>
<feature type="glycosylation site" description="N-linked (GlcNAc...) asparagine" evidence="5">
    <location>
        <position position="87"/>
    </location>
</feature>
<feature type="glycosylation site" description="N-linked (GlcNAc...) asparagine" evidence="5">
    <location>
        <position position="130"/>
    </location>
</feature>
<feature type="disulfide bond" evidence="2">
    <location>
        <begin position="147"/>
        <end position="161"/>
    </location>
</feature>
<feature type="disulfide bond" description="Associated with receptor activation" evidence="2">
    <location>
        <begin position="209"/>
        <end position="210"/>
    </location>
</feature>
<feature type="splice variant" id="VSP_000075" description="In isoform Short." evidence="7">
    <location>
        <begin position="262"/>
        <end position="290"/>
    </location>
</feature>
<reference key="1">
    <citation type="journal article" date="1995" name="Eur. J. Neurosci.">
        <title>Alpha-bungarotoxin-sensitive nicotinic receptors on bovine chromaffin cells: molecular cloning, functional expression and alternative splicing of the alpha 7 subunit.</title>
        <authorList>
            <person name="Garcia-Guzman M."/>
            <person name="Sala F."/>
            <person name="Sala S."/>
            <person name="Campos-Caro A."/>
            <person name="Stuehmer W."/>
            <person name="Gutierrez L."/>
            <person name="Criado M."/>
        </authorList>
    </citation>
    <scope>NUCLEOTIDE SEQUENCE [MRNA] (ISOFORMS LONG AND SHORT)</scope>
    <scope>SUBUNIT</scope>
    <source>
        <tissue>Adrenal medulla</tissue>
    </source>
</reference>
<sequence>MRGSLCLALAASILHVSLQGEFQRKLYKDLVKNYNPLERPVANDSLPLTVYFSLSLLQIMDVDEKNQVLTTNIWLQMTWTDHYLQWNASEYPGVKTVRFPDGQIWKPDILLYNSADERFDATFHTNVLVNSSGHCQYLPPGIFKSSCYIDVRWFPFDVQQCKLKFGSWSYGGWSLDLQMQEADISGYIPNGEWDLVGVLGKRSEKFYECCKEPYPDVTFTVSIRRRTLYYGLNLLIPCVLISALALLVFLLPADSGEKISLGITVLLSLTVFMLLVAEIMPATSDSVPLIAQYFASTMIIVGLSVVVTVIVLQYHHHDPDGGKMPKWTRVVLLNWCAWFLRMKRPGEDKVRPACQHNERRCSLASVEMSAVAGPPATNGNLLYIGFRGLDTMHCAPTPDSGVVCGRVACSPTHDEHLLHAGQPSEGDPDLAKILEEVRYIAHRFRCQDESEAVCSEWKFAACVVDRLCLMAFSVFTILCTIGILMSAPNFVEAVSKDFA</sequence>
<keyword id="KW-0025">Alternative splicing</keyword>
<keyword id="KW-0106">Calcium</keyword>
<keyword id="KW-1003">Cell membrane</keyword>
<keyword id="KW-1015">Disulfide bond</keyword>
<keyword id="KW-0325">Glycoprotein</keyword>
<keyword id="KW-0407">Ion channel</keyword>
<keyword id="KW-0406">Ion transport</keyword>
<keyword id="KW-1071">Ligand-gated ion channel</keyword>
<keyword id="KW-0472">Membrane</keyword>
<keyword id="KW-0479">Metal-binding</keyword>
<keyword id="KW-0628">Postsynaptic cell membrane</keyword>
<keyword id="KW-0675">Receptor</keyword>
<keyword id="KW-1185">Reference proteome</keyword>
<keyword id="KW-0732">Signal</keyword>
<keyword id="KW-0770">Synapse</keyword>
<keyword id="KW-0812">Transmembrane</keyword>
<keyword id="KW-1133">Transmembrane helix</keyword>
<keyword id="KW-0813">Transport</keyword>
<gene>
    <name type="primary">CHRNA7</name>
</gene>
<comment type="function">
    <text evidence="2 4">Component of neuronal acetylcholine receptors (nAChRs) that function as pentameric, ligand-gated cation channels with high calcium permeability among other activities. nAChRs are excitatory neurotrasnmitter receptors formed by a collection of nAChR subunits known to mediate synaptic transmission in the nervous system and the neuromuscular junction. Each nAchR subunit confers differential attributes to channel properties, including activation, deactivation and desensitization kinetics, pH sensitivity, cation permeability, and binding to allosteric modulators. CHRNA7 forms homopentameric neuronal acetylcholine receptors abundantly expressed in the central nervous system, characterized by fast desensitization and high calcium permeability. Also forms heteropentamers with CHRNB2, mainly expressed in basal forebrain cholinergic neurons. Involved in the modulation of calcium-dependent signaling pathways and influences the release of neurotransmitters, including dopamine, glutamate and GABA. Also expressed in non-neuronal cells such as immune cells like lymphocytes, monocytes and macrophages. In T cells, activation induces metabotropic signaling that results in an increase of intracellular Ca2+ concentrations, independent of ionotropic receptor functions. In macrophages, required for acetylcholine-mediated inhibition of TNF and other inflammatory cytokine release. Once activated by acetylcholine, nicotine or other agonists, selectively inhibits production of pro-inflammatory cytokines while leaving anti-inflammatory cytokines undisturbed. Stimulates the cholinergic anti-inflammatory pathway, controlling inflammation by inhibiting NFKB nuclear translocation and activating the JAK2-STAT3 pathway, independently of ion channel activity. Also expressed in the urothelium where it modulates reflex bladder activity by increasing intracellular calcium through internal stores and decreasing basal ATP release (By similarity).</text>
</comment>
<comment type="catalytic activity">
    <reaction evidence="2">
        <text>Ca(2+)(in) = Ca(2+)(out)</text>
        <dbReference type="Rhea" id="RHEA:29671"/>
        <dbReference type="ChEBI" id="CHEBI:29108"/>
    </reaction>
</comment>
<comment type="catalytic activity">
    <reaction evidence="2">
        <text>K(+)(in) = K(+)(out)</text>
        <dbReference type="Rhea" id="RHEA:29463"/>
        <dbReference type="ChEBI" id="CHEBI:29103"/>
    </reaction>
</comment>
<comment type="catalytic activity">
    <reaction evidence="1">
        <text>Na(+)(in) = Na(+)(out)</text>
        <dbReference type="Rhea" id="RHEA:34963"/>
        <dbReference type="ChEBI" id="CHEBI:29101"/>
    </reaction>
</comment>
<comment type="catalytic activity">
    <reaction evidence="2">
        <text>choline(out) = choline(in)</text>
        <dbReference type="Rhea" id="RHEA:32751"/>
        <dbReference type="ChEBI" id="CHEBI:15354"/>
    </reaction>
</comment>
<comment type="catalytic activity">
    <reaction evidence="2">
        <text>NH4(+)(in) = NH4(+)(out)</text>
        <dbReference type="Rhea" id="RHEA:28747"/>
        <dbReference type="ChEBI" id="CHEBI:28938"/>
    </reaction>
</comment>
<comment type="catalytic activity">
    <reaction evidence="2">
        <text>L-arginine(in) = L-arginine(out)</text>
        <dbReference type="Rhea" id="RHEA:32143"/>
        <dbReference type="ChEBI" id="CHEBI:32682"/>
    </reaction>
</comment>
<comment type="catalytic activity">
    <reaction evidence="2">
        <text>guanidine(out) = guanidine(in)</text>
        <dbReference type="Rhea" id="RHEA:73883"/>
        <dbReference type="ChEBI" id="CHEBI:30087"/>
    </reaction>
</comment>
<comment type="activity regulation">
    <text evidence="2">Activated by a myriad of ligands such as acetylcholine, cytisine, nicotine, choline and epibatidine. Oligomeric amyloid-beta protein 42 activates specifially CHRNA7:CHRNB2 nAchRs. Activity is modulated by positive allosteric modulators (PAMs), such as flavonoids, with a wide range of chemical diversity, pharmacological sensitivity and efficacy. AChR activity is inhibited by the antagonists alpha-conotoxons RgIA, ImI and ImII, small disulfide-constrained peptides from cone snails. Alpha-conotoxin PnIC selectively inhibits CHRNA7:CHRNB2 over CHRNA7 homopentamer.</text>
</comment>
<comment type="subunit">
    <text evidence="2 4 6">Homopentamer. Homooligomer of the short form gives rise to unfunctional channels, as does coexpression of both long and short forms of the receptor (PubMed:7620615). Can also form heteropentamers with CHRNB2, mainly found in basal forebrain cholinergic neurons (By similarity). Interacts with RIC3; which is required for proper folding and assembly. Interacts with LYPD6 (By similarity). Interacts with CANX (By similarity).</text>
</comment>
<comment type="subcellular location">
    <subcellularLocation>
        <location evidence="4">Postsynaptic cell membrane</location>
        <topology evidence="5">Multi-pass membrane protein</topology>
    </subcellularLocation>
    <subcellularLocation>
        <location evidence="2">Cell membrane</location>
        <topology evidence="5">Multi-pass membrane protein</topology>
    </subcellularLocation>
    <text evidence="2 4">TMEM35A/NACHO promotes its trafficking to the cell membrane (By similarity). RIC3 promotes its trafficking to the cell membrane (By similarity).</text>
</comment>
<comment type="alternative products">
    <event type="alternative splicing"/>
    <isoform>
        <id>P54131-1</id>
        <name>Long</name>
        <sequence type="displayed"/>
    </isoform>
    <isoform>
        <id>P54131-2</id>
        <name>Short</name>
        <sequence type="described" ref="VSP_000075"/>
    </isoform>
</comment>
<comment type="tissue specificity">
    <text>At least in chromaffin cells.</text>
</comment>
<comment type="PTM">
    <text evidence="3">Glycosylations at Asn-43, Asn-87 and Asn-130 are essential for TMEM35A/NACHO-mediated proper subunit assembly and trafficking to the cell membrane.</text>
</comment>
<comment type="similarity">
    <text evidence="8">Belongs to the ligand-gated ion channel (TC 1.A.9) family. Acetylcholine receptor (TC 1.A.9.1) subfamily. Alpha-7/CHRNA7 sub-subfamily.</text>
</comment>
<organism>
    <name type="scientific">Bos taurus</name>
    <name type="common">Bovine</name>
    <dbReference type="NCBI Taxonomy" id="9913"/>
    <lineage>
        <taxon>Eukaryota</taxon>
        <taxon>Metazoa</taxon>
        <taxon>Chordata</taxon>
        <taxon>Craniata</taxon>
        <taxon>Vertebrata</taxon>
        <taxon>Euteleostomi</taxon>
        <taxon>Mammalia</taxon>
        <taxon>Eutheria</taxon>
        <taxon>Laurasiatheria</taxon>
        <taxon>Artiodactyla</taxon>
        <taxon>Ruminantia</taxon>
        <taxon>Pecora</taxon>
        <taxon>Bovidae</taxon>
        <taxon>Bovinae</taxon>
        <taxon>Bos</taxon>
    </lineage>
</organism>